<evidence type="ECO:0000255" key="1">
    <source>
        <dbReference type="HAMAP-Rule" id="MF_00144"/>
    </source>
</evidence>
<name>MNMA_PSYA2</name>
<protein>
    <recommendedName>
        <fullName evidence="1">tRNA-specific 2-thiouridylase MnmA</fullName>
        <ecNumber evidence="1">2.8.1.13</ecNumber>
    </recommendedName>
</protein>
<gene>
    <name evidence="1" type="primary">mnmA</name>
    <name type="ordered locus">Psyc_1244</name>
</gene>
<proteinExistence type="inferred from homology"/>
<feature type="chain" id="PRO_0000349761" description="tRNA-specific 2-thiouridylase MnmA">
    <location>
        <begin position="1"/>
        <end position="408"/>
    </location>
</feature>
<feature type="region of interest" description="Interaction with target base in tRNA" evidence="1">
    <location>
        <begin position="124"/>
        <end position="126"/>
    </location>
</feature>
<feature type="region of interest" description="Interaction with tRNA" evidence="1">
    <location>
        <begin position="181"/>
        <end position="183"/>
    </location>
</feature>
<feature type="region of interest" description="Interaction with tRNA" evidence="1">
    <location>
        <begin position="348"/>
        <end position="349"/>
    </location>
</feature>
<feature type="active site" description="Nucleophile" evidence="1">
    <location>
        <position position="129"/>
    </location>
</feature>
<feature type="active site" description="Cysteine persulfide intermediate" evidence="1">
    <location>
        <position position="231"/>
    </location>
</feature>
<feature type="binding site" evidence="1">
    <location>
        <begin position="38"/>
        <end position="45"/>
    </location>
    <ligand>
        <name>ATP</name>
        <dbReference type="ChEBI" id="CHEBI:30616"/>
    </ligand>
</feature>
<feature type="binding site" evidence="1">
    <location>
        <position position="64"/>
    </location>
    <ligand>
        <name>ATP</name>
        <dbReference type="ChEBI" id="CHEBI:30616"/>
    </ligand>
</feature>
<feature type="binding site" evidence="1">
    <location>
        <position position="153"/>
    </location>
    <ligand>
        <name>ATP</name>
        <dbReference type="ChEBI" id="CHEBI:30616"/>
    </ligand>
</feature>
<feature type="site" description="Interaction with tRNA" evidence="1">
    <location>
        <position position="154"/>
    </location>
</feature>
<feature type="site" description="Interaction with tRNA" evidence="1">
    <location>
        <position position="383"/>
    </location>
</feature>
<feature type="disulfide bond" description="Alternate" evidence="1">
    <location>
        <begin position="129"/>
        <end position="231"/>
    </location>
</feature>
<keyword id="KW-0067">ATP-binding</keyword>
<keyword id="KW-0963">Cytoplasm</keyword>
<keyword id="KW-1015">Disulfide bond</keyword>
<keyword id="KW-0547">Nucleotide-binding</keyword>
<keyword id="KW-1185">Reference proteome</keyword>
<keyword id="KW-0694">RNA-binding</keyword>
<keyword id="KW-0808">Transferase</keyword>
<keyword id="KW-0819">tRNA processing</keyword>
<keyword id="KW-0820">tRNA-binding</keyword>
<dbReference type="EC" id="2.8.1.13" evidence="1"/>
<dbReference type="EMBL" id="CP000082">
    <property type="protein sequence ID" value="AAZ19094.1"/>
    <property type="molecule type" value="Genomic_DNA"/>
</dbReference>
<dbReference type="RefSeq" id="WP_011280516.1">
    <property type="nucleotide sequence ID" value="NC_007204.1"/>
</dbReference>
<dbReference type="SMR" id="Q4FSB4"/>
<dbReference type="STRING" id="259536.Psyc_1244"/>
<dbReference type="KEGG" id="par:Psyc_1244"/>
<dbReference type="eggNOG" id="COG0482">
    <property type="taxonomic scope" value="Bacteria"/>
</dbReference>
<dbReference type="HOGENOM" id="CLU_035188_1_0_6"/>
<dbReference type="OrthoDB" id="9800696at2"/>
<dbReference type="Proteomes" id="UP000000546">
    <property type="component" value="Chromosome"/>
</dbReference>
<dbReference type="GO" id="GO:0005737">
    <property type="term" value="C:cytoplasm"/>
    <property type="evidence" value="ECO:0007669"/>
    <property type="project" value="UniProtKB-SubCell"/>
</dbReference>
<dbReference type="GO" id="GO:0005524">
    <property type="term" value="F:ATP binding"/>
    <property type="evidence" value="ECO:0007669"/>
    <property type="project" value="UniProtKB-KW"/>
</dbReference>
<dbReference type="GO" id="GO:0000049">
    <property type="term" value="F:tRNA binding"/>
    <property type="evidence" value="ECO:0007669"/>
    <property type="project" value="UniProtKB-KW"/>
</dbReference>
<dbReference type="GO" id="GO:0103016">
    <property type="term" value="F:tRNA-uridine 2-sulfurtransferase activity"/>
    <property type="evidence" value="ECO:0007669"/>
    <property type="project" value="UniProtKB-EC"/>
</dbReference>
<dbReference type="GO" id="GO:0002143">
    <property type="term" value="P:tRNA wobble position uridine thiolation"/>
    <property type="evidence" value="ECO:0007669"/>
    <property type="project" value="TreeGrafter"/>
</dbReference>
<dbReference type="CDD" id="cd01998">
    <property type="entry name" value="MnmA_TRMU-like"/>
    <property type="match status" value="1"/>
</dbReference>
<dbReference type="FunFam" id="2.30.30.280:FF:000001">
    <property type="entry name" value="tRNA-specific 2-thiouridylase MnmA"/>
    <property type="match status" value="1"/>
</dbReference>
<dbReference type="FunFam" id="2.40.30.10:FF:000023">
    <property type="entry name" value="tRNA-specific 2-thiouridylase MnmA"/>
    <property type="match status" value="1"/>
</dbReference>
<dbReference type="FunFam" id="3.40.50.620:FF:000004">
    <property type="entry name" value="tRNA-specific 2-thiouridylase MnmA"/>
    <property type="match status" value="1"/>
</dbReference>
<dbReference type="Gene3D" id="2.30.30.280">
    <property type="entry name" value="Adenine nucleotide alpha hydrolases-like domains"/>
    <property type="match status" value="1"/>
</dbReference>
<dbReference type="Gene3D" id="3.40.50.620">
    <property type="entry name" value="HUPs"/>
    <property type="match status" value="1"/>
</dbReference>
<dbReference type="Gene3D" id="2.40.30.10">
    <property type="entry name" value="Translation factors"/>
    <property type="match status" value="1"/>
</dbReference>
<dbReference type="HAMAP" id="MF_00144">
    <property type="entry name" value="tRNA_thiouridyl_MnmA"/>
    <property type="match status" value="1"/>
</dbReference>
<dbReference type="InterPro" id="IPR004506">
    <property type="entry name" value="MnmA-like"/>
</dbReference>
<dbReference type="InterPro" id="IPR046885">
    <property type="entry name" value="MnmA-like_C"/>
</dbReference>
<dbReference type="InterPro" id="IPR046884">
    <property type="entry name" value="MnmA-like_central"/>
</dbReference>
<dbReference type="InterPro" id="IPR023382">
    <property type="entry name" value="MnmA-like_central_sf"/>
</dbReference>
<dbReference type="InterPro" id="IPR014729">
    <property type="entry name" value="Rossmann-like_a/b/a_fold"/>
</dbReference>
<dbReference type="NCBIfam" id="NF001138">
    <property type="entry name" value="PRK00143.1"/>
    <property type="match status" value="1"/>
</dbReference>
<dbReference type="NCBIfam" id="TIGR00420">
    <property type="entry name" value="trmU"/>
    <property type="match status" value="1"/>
</dbReference>
<dbReference type="PANTHER" id="PTHR11933:SF5">
    <property type="entry name" value="MITOCHONDRIAL TRNA-SPECIFIC 2-THIOURIDYLASE 1"/>
    <property type="match status" value="1"/>
</dbReference>
<dbReference type="PANTHER" id="PTHR11933">
    <property type="entry name" value="TRNA 5-METHYLAMINOMETHYL-2-THIOURIDYLATE -METHYLTRANSFERASE"/>
    <property type="match status" value="1"/>
</dbReference>
<dbReference type="Pfam" id="PF03054">
    <property type="entry name" value="tRNA_Me_trans"/>
    <property type="match status" value="1"/>
</dbReference>
<dbReference type="Pfam" id="PF20258">
    <property type="entry name" value="tRNA_Me_trans_C"/>
    <property type="match status" value="1"/>
</dbReference>
<dbReference type="Pfam" id="PF20259">
    <property type="entry name" value="tRNA_Me_trans_M"/>
    <property type="match status" value="1"/>
</dbReference>
<dbReference type="SUPFAM" id="SSF52402">
    <property type="entry name" value="Adenine nucleotide alpha hydrolases-like"/>
    <property type="match status" value="1"/>
</dbReference>
<comment type="function">
    <text evidence="1">Catalyzes the 2-thiolation of uridine at the wobble position (U34) of tRNA, leading to the formation of s(2)U34.</text>
</comment>
<comment type="catalytic activity">
    <reaction evidence="1">
        <text>S-sulfanyl-L-cysteinyl-[protein] + uridine(34) in tRNA + AH2 + ATP = 2-thiouridine(34) in tRNA + L-cysteinyl-[protein] + A + AMP + diphosphate + H(+)</text>
        <dbReference type="Rhea" id="RHEA:47032"/>
        <dbReference type="Rhea" id="RHEA-COMP:10131"/>
        <dbReference type="Rhea" id="RHEA-COMP:11726"/>
        <dbReference type="Rhea" id="RHEA-COMP:11727"/>
        <dbReference type="Rhea" id="RHEA-COMP:11728"/>
        <dbReference type="ChEBI" id="CHEBI:13193"/>
        <dbReference type="ChEBI" id="CHEBI:15378"/>
        <dbReference type="ChEBI" id="CHEBI:17499"/>
        <dbReference type="ChEBI" id="CHEBI:29950"/>
        <dbReference type="ChEBI" id="CHEBI:30616"/>
        <dbReference type="ChEBI" id="CHEBI:33019"/>
        <dbReference type="ChEBI" id="CHEBI:61963"/>
        <dbReference type="ChEBI" id="CHEBI:65315"/>
        <dbReference type="ChEBI" id="CHEBI:87170"/>
        <dbReference type="ChEBI" id="CHEBI:456215"/>
        <dbReference type="EC" id="2.8.1.13"/>
    </reaction>
</comment>
<comment type="subcellular location">
    <subcellularLocation>
        <location evidence="1">Cytoplasm</location>
    </subcellularLocation>
</comment>
<comment type="similarity">
    <text evidence="1">Belongs to the MnmA/TRMU family.</text>
</comment>
<reference key="1">
    <citation type="journal article" date="2010" name="Appl. Environ. Microbiol.">
        <title>The genome sequence of Psychrobacter arcticus 273-4, a psychroactive Siberian permafrost bacterium, reveals mechanisms for adaptation to low-temperature growth.</title>
        <authorList>
            <person name="Ayala-del-Rio H.L."/>
            <person name="Chain P.S."/>
            <person name="Grzymski J.J."/>
            <person name="Ponder M.A."/>
            <person name="Ivanova N."/>
            <person name="Bergholz P.W."/>
            <person name="Di Bartolo G."/>
            <person name="Hauser L."/>
            <person name="Land M."/>
            <person name="Bakermans C."/>
            <person name="Rodrigues D."/>
            <person name="Klappenbach J."/>
            <person name="Zarka D."/>
            <person name="Larimer F."/>
            <person name="Richardson P."/>
            <person name="Murray A."/>
            <person name="Thomashow M."/>
            <person name="Tiedje J.M."/>
        </authorList>
    </citation>
    <scope>NUCLEOTIDE SEQUENCE [LARGE SCALE GENOMIC DNA]</scope>
    <source>
        <strain>DSM 17307 / VKM B-2377 / 273-4</strain>
    </source>
</reference>
<sequence>MSAMPNTSSISVSAAFDAHRPLTLTYIDNPSTKHVIVGMSGGVDSSVSAVLLQQAGFVVEGLFMKNWEEDDGTEYCTAMDDLADAQAVCDKIGIKLHTANFAMEYWDRVFEHFLAEYKAGRTPNPDILCNKEIKFKAFLDYALTLGADYIATGHYTRRSVNYKNNDGIEVAQLLRGLDNNKDQSYFLHAVGGDKLAKTLFPVGELEKPVVRQIAEEHDLITANKKDSTGICFIGERRFKDFLQQYLPAQKGDIVTDDGINIGTHDGLMYYTLGQRGGIGIGGVKDRPEEPWFVLAKDLDNNRLIVGQGHEHPMMLSNELHAYKLDWTDGLPPTDIFSLEGLRCMAKSRYRQPDQACRVFAVNADGSEVRVIFDEPQRAVTPGQSAVFYIEEVCLGGGVIASIDAPCGF</sequence>
<accession>Q4FSB4</accession>
<organism>
    <name type="scientific">Psychrobacter arcticus (strain DSM 17307 / VKM B-2377 / 273-4)</name>
    <dbReference type="NCBI Taxonomy" id="259536"/>
    <lineage>
        <taxon>Bacteria</taxon>
        <taxon>Pseudomonadati</taxon>
        <taxon>Pseudomonadota</taxon>
        <taxon>Gammaproteobacteria</taxon>
        <taxon>Moraxellales</taxon>
        <taxon>Moraxellaceae</taxon>
        <taxon>Psychrobacter</taxon>
    </lineage>
</organism>